<protein>
    <recommendedName>
        <fullName evidence="1">Polyamine aminopropyltransferase 2</fullName>
    </recommendedName>
    <alternativeName>
        <fullName evidence="1">Putrescine aminopropyltransferase 2</fullName>
        <shortName evidence="1">PAPT 2</shortName>
    </alternativeName>
    <alternativeName>
        <fullName evidence="1">Spermidine synthase 2</fullName>
        <shortName evidence="1">SPDS 2</shortName>
        <shortName evidence="1">SPDSY 2</shortName>
        <ecNumber evidence="1">2.5.1.16</ecNumber>
    </alternativeName>
</protein>
<name>SPEE2_STRCO</name>
<evidence type="ECO:0000255" key="1">
    <source>
        <dbReference type="HAMAP-Rule" id="MF_00198"/>
    </source>
</evidence>
<evidence type="ECO:0000256" key="2">
    <source>
        <dbReference type="SAM" id="MobiDB-lite"/>
    </source>
</evidence>
<sequence length="554" mass="57759">MIEPHAPAPPGSPPSWGGPCGPEAPARLPVRPAVGRFLVLAGVFVCAACGLVYELELVALASYLIGDSVTQASVVLSVMVFAMGLGSLAAKRLRGLAAAGFGALEAALALVGGSSAMLLYAVFAWTGGWGGLWADGPRILLVAFSLAIGVLIGAEVPLLMELIQRVRRQDPGGAVADLFAADYVGALVGGLAFPFVLLPFLGQLTGALLTGTVNAVVGAALVLGLFRRDLTRRARWLLLTANAVVLALLATATVLADDFERAARHAVYGQDVRVAVRTGVQEVVLTGDADGRPLDLFLDGRLRVRGSDERSYHEALVHPAMGGPHARVLILGGGDGLAAREVLRHPGVRRVDVLEADPGLARLARHDPGLSTLNEHAYGDARVRVLSGDAFHRLRATPSATYDVVISDLPDPGVTASTKLYSQEFYGLLRRVLAPDGRLAVHAGPVDARPRAFWTVDATLRAAGLPAVAYRVGARDTGPGPGSVPGPRRAAAGPPAPRGWGFLLAARTAPAPRLDPAAPRPHSLTPDSLARGVREAARTQMAGLPPSTLVHPRF</sequence>
<dbReference type="EC" id="2.5.1.16" evidence="1"/>
<dbReference type="EMBL" id="AL939117">
    <property type="protein sequence ID" value="CAB42042.1"/>
    <property type="molecule type" value="Genomic_DNA"/>
</dbReference>
<dbReference type="PIR" id="T36545">
    <property type="entry name" value="T36545"/>
</dbReference>
<dbReference type="RefSeq" id="NP_627849.1">
    <property type="nucleotide sequence ID" value="NC_003888.3"/>
</dbReference>
<dbReference type="RefSeq" id="WP_011029148.1">
    <property type="nucleotide sequence ID" value="NZ_VNID01000003.1"/>
</dbReference>
<dbReference type="SMR" id="Q9X8S2"/>
<dbReference type="STRING" id="100226.gene:17761278"/>
<dbReference type="PaxDb" id="100226-SCO3655"/>
<dbReference type="KEGG" id="sco:SCO3655"/>
<dbReference type="PATRIC" id="fig|100226.15.peg.3716"/>
<dbReference type="eggNOG" id="COG4262">
    <property type="taxonomic scope" value="Bacteria"/>
</dbReference>
<dbReference type="HOGENOM" id="CLU_034289_0_0_11"/>
<dbReference type="InParanoid" id="Q9X8S2"/>
<dbReference type="OrthoDB" id="9793120at2"/>
<dbReference type="PhylomeDB" id="Q9X8S2"/>
<dbReference type="UniPathway" id="UPA00248">
    <property type="reaction ID" value="UER00314"/>
</dbReference>
<dbReference type="Proteomes" id="UP000001973">
    <property type="component" value="Chromosome"/>
</dbReference>
<dbReference type="GO" id="GO:0005886">
    <property type="term" value="C:plasma membrane"/>
    <property type="evidence" value="ECO:0007669"/>
    <property type="project" value="UniProtKB-SubCell"/>
</dbReference>
<dbReference type="GO" id="GO:0004766">
    <property type="term" value="F:spermidine synthase activity"/>
    <property type="evidence" value="ECO:0007669"/>
    <property type="project" value="UniProtKB-UniRule"/>
</dbReference>
<dbReference type="GO" id="GO:0010487">
    <property type="term" value="F:thermospermine synthase activity"/>
    <property type="evidence" value="ECO:0007669"/>
    <property type="project" value="UniProtKB-ARBA"/>
</dbReference>
<dbReference type="GO" id="GO:0006596">
    <property type="term" value="P:polyamine biosynthetic process"/>
    <property type="evidence" value="ECO:0000318"/>
    <property type="project" value="GO_Central"/>
</dbReference>
<dbReference type="GO" id="GO:0008295">
    <property type="term" value="P:spermidine biosynthetic process"/>
    <property type="evidence" value="ECO:0007669"/>
    <property type="project" value="UniProtKB-UniRule"/>
</dbReference>
<dbReference type="CDD" id="cd02440">
    <property type="entry name" value="AdoMet_MTases"/>
    <property type="match status" value="1"/>
</dbReference>
<dbReference type="Gene3D" id="3.40.50.150">
    <property type="entry name" value="Vaccinia Virus protein VP39"/>
    <property type="match status" value="1"/>
</dbReference>
<dbReference type="HAMAP" id="MF_00198">
    <property type="entry name" value="Spermidine_synth"/>
    <property type="match status" value="1"/>
</dbReference>
<dbReference type="InterPro" id="IPR036259">
    <property type="entry name" value="MFS_trans_sf"/>
</dbReference>
<dbReference type="InterPro" id="IPR030374">
    <property type="entry name" value="PABS"/>
</dbReference>
<dbReference type="InterPro" id="IPR030373">
    <property type="entry name" value="PABS_CS"/>
</dbReference>
<dbReference type="InterPro" id="IPR029063">
    <property type="entry name" value="SAM-dependent_MTases_sf"/>
</dbReference>
<dbReference type="InterPro" id="IPR001045">
    <property type="entry name" value="Spermi_synthase"/>
</dbReference>
<dbReference type="NCBIfam" id="NF037959">
    <property type="entry name" value="MFS_SpdSyn"/>
    <property type="match status" value="1"/>
</dbReference>
<dbReference type="NCBIfam" id="NF002956">
    <property type="entry name" value="PRK03612.1"/>
    <property type="match status" value="1"/>
</dbReference>
<dbReference type="PANTHER" id="PTHR43317">
    <property type="entry name" value="THERMOSPERMINE SYNTHASE ACAULIS5"/>
    <property type="match status" value="1"/>
</dbReference>
<dbReference type="PANTHER" id="PTHR43317:SF1">
    <property type="entry name" value="THERMOSPERMINE SYNTHASE ACAULIS5"/>
    <property type="match status" value="1"/>
</dbReference>
<dbReference type="Pfam" id="PF01564">
    <property type="entry name" value="Spermine_synth"/>
    <property type="match status" value="1"/>
</dbReference>
<dbReference type="SUPFAM" id="SSF103473">
    <property type="entry name" value="MFS general substrate transporter"/>
    <property type="match status" value="1"/>
</dbReference>
<dbReference type="SUPFAM" id="SSF53335">
    <property type="entry name" value="S-adenosyl-L-methionine-dependent methyltransferases"/>
    <property type="match status" value="1"/>
</dbReference>
<dbReference type="PROSITE" id="PS01330">
    <property type="entry name" value="PABS_1"/>
    <property type="match status" value="1"/>
</dbReference>
<dbReference type="PROSITE" id="PS51006">
    <property type="entry name" value="PABS_2"/>
    <property type="match status" value="1"/>
</dbReference>
<gene>
    <name evidence="1" type="primary">speE2</name>
    <name type="ordered locus">SCO3655</name>
    <name type="ORF">SCH10.33c</name>
</gene>
<organism>
    <name type="scientific">Streptomyces coelicolor (strain ATCC BAA-471 / A3(2) / M145)</name>
    <dbReference type="NCBI Taxonomy" id="100226"/>
    <lineage>
        <taxon>Bacteria</taxon>
        <taxon>Bacillati</taxon>
        <taxon>Actinomycetota</taxon>
        <taxon>Actinomycetes</taxon>
        <taxon>Kitasatosporales</taxon>
        <taxon>Streptomycetaceae</taxon>
        <taxon>Streptomyces</taxon>
        <taxon>Streptomyces albidoflavus group</taxon>
    </lineage>
</organism>
<accession>Q9X8S2</accession>
<proteinExistence type="inferred from homology"/>
<feature type="chain" id="PRO_0000156509" description="Polyamine aminopropyltransferase 2">
    <location>
        <begin position="1"/>
        <end position="554"/>
    </location>
</feature>
<feature type="transmembrane region" description="Helical" evidence="1">
    <location>
        <begin position="37"/>
        <end position="57"/>
    </location>
</feature>
<feature type="transmembrane region" description="Helical" evidence="1">
    <location>
        <begin position="69"/>
        <end position="89"/>
    </location>
</feature>
<feature type="transmembrane region" description="Helical" evidence="1">
    <location>
        <begin position="106"/>
        <end position="126"/>
    </location>
</feature>
<feature type="transmembrane region" description="Helical" evidence="1">
    <location>
        <begin position="139"/>
        <end position="159"/>
    </location>
</feature>
<feature type="transmembrane region" description="Helical" evidence="1">
    <location>
        <begin position="184"/>
        <end position="204"/>
    </location>
</feature>
<feature type="transmembrane region" description="Helical" evidence="1">
    <location>
        <begin position="206"/>
        <end position="226"/>
    </location>
</feature>
<feature type="domain" description="PABS" evidence="1">
    <location>
        <begin position="247"/>
        <end position="492"/>
    </location>
</feature>
<feature type="region of interest" description="Disordered" evidence="2">
    <location>
        <begin position="1"/>
        <end position="20"/>
    </location>
</feature>
<feature type="region of interest" description="Spermidine synthase">
    <location>
        <begin position="235"/>
        <end position="516"/>
    </location>
</feature>
<feature type="region of interest" description="Disordered" evidence="2">
    <location>
        <begin position="476"/>
        <end position="495"/>
    </location>
</feature>
<feature type="compositionally biased region" description="Pro residues" evidence="2">
    <location>
        <begin position="1"/>
        <end position="13"/>
    </location>
</feature>
<feature type="compositionally biased region" description="Low complexity" evidence="2">
    <location>
        <begin position="485"/>
        <end position="495"/>
    </location>
</feature>
<feature type="active site" description="Proton acceptor" evidence="1">
    <location>
        <position position="408"/>
    </location>
</feature>
<feature type="binding site" evidence="1">
    <location>
        <position position="281"/>
    </location>
    <ligand>
        <name>S-methyl-5'-thioadenosine</name>
        <dbReference type="ChEBI" id="CHEBI:17509"/>
    </ligand>
</feature>
<feature type="binding site" evidence="1">
    <location>
        <position position="313"/>
    </location>
    <ligand>
        <name>spermidine</name>
        <dbReference type="ChEBI" id="CHEBI:57834"/>
    </ligand>
</feature>
<feature type="binding site" evidence="1">
    <location>
        <position position="335"/>
    </location>
    <ligand>
        <name>spermidine</name>
        <dbReference type="ChEBI" id="CHEBI:57834"/>
    </ligand>
</feature>
<feature type="binding site" evidence="1">
    <location>
        <position position="355"/>
    </location>
    <ligand>
        <name>S-methyl-5'-thioadenosine</name>
        <dbReference type="ChEBI" id="CHEBI:17509"/>
    </ligand>
</feature>
<feature type="binding site" evidence="1">
    <location>
        <begin position="389"/>
        <end position="390"/>
    </location>
    <ligand>
        <name>S-methyl-5'-thioadenosine</name>
        <dbReference type="ChEBI" id="CHEBI:17509"/>
    </ligand>
</feature>
<reference key="1">
    <citation type="journal article" date="2002" name="Nature">
        <title>Complete genome sequence of the model actinomycete Streptomyces coelicolor A3(2).</title>
        <authorList>
            <person name="Bentley S.D."/>
            <person name="Chater K.F."/>
            <person name="Cerdeno-Tarraga A.-M."/>
            <person name="Challis G.L."/>
            <person name="Thomson N.R."/>
            <person name="James K.D."/>
            <person name="Harris D.E."/>
            <person name="Quail M.A."/>
            <person name="Kieser H."/>
            <person name="Harper D."/>
            <person name="Bateman A."/>
            <person name="Brown S."/>
            <person name="Chandra G."/>
            <person name="Chen C.W."/>
            <person name="Collins M."/>
            <person name="Cronin A."/>
            <person name="Fraser A."/>
            <person name="Goble A."/>
            <person name="Hidalgo J."/>
            <person name="Hornsby T."/>
            <person name="Howarth S."/>
            <person name="Huang C.-H."/>
            <person name="Kieser T."/>
            <person name="Larke L."/>
            <person name="Murphy L.D."/>
            <person name="Oliver K."/>
            <person name="O'Neil S."/>
            <person name="Rabbinowitsch E."/>
            <person name="Rajandream M.A."/>
            <person name="Rutherford K.M."/>
            <person name="Rutter S."/>
            <person name="Seeger K."/>
            <person name="Saunders D."/>
            <person name="Sharp S."/>
            <person name="Squares R."/>
            <person name="Squares S."/>
            <person name="Taylor K."/>
            <person name="Warren T."/>
            <person name="Wietzorrek A."/>
            <person name="Woodward J.R."/>
            <person name="Barrell B.G."/>
            <person name="Parkhill J."/>
            <person name="Hopwood D.A."/>
        </authorList>
    </citation>
    <scope>NUCLEOTIDE SEQUENCE [LARGE SCALE GENOMIC DNA]</scope>
    <source>
        <strain>ATCC BAA-471 / A3(2) / M145</strain>
    </source>
</reference>
<keyword id="KW-1003">Cell membrane</keyword>
<keyword id="KW-0472">Membrane</keyword>
<keyword id="KW-0620">Polyamine biosynthesis</keyword>
<keyword id="KW-1185">Reference proteome</keyword>
<keyword id="KW-0745">Spermidine biosynthesis</keyword>
<keyword id="KW-0808">Transferase</keyword>
<keyword id="KW-0812">Transmembrane</keyword>
<keyword id="KW-1133">Transmembrane helix</keyword>
<comment type="function">
    <text evidence="1">Catalyzes the irreversible transfer of a propylamine group from the amino donor S-adenosylmethioninamine (decarboxy-AdoMet) to putrescine (1,4-diaminobutane) to yield spermidine.</text>
</comment>
<comment type="catalytic activity">
    <reaction evidence="1">
        <text>S-adenosyl 3-(methylsulfanyl)propylamine + putrescine = S-methyl-5'-thioadenosine + spermidine + H(+)</text>
        <dbReference type="Rhea" id="RHEA:12721"/>
        <dbReference type="ChEBI" id="CHEBI:15378"/>
        <dbReference type="ChEBI" id="CHEBI:17509"/>
        <dbReference type="ChEBI" id="CHEBI:57443"/>
        <dbReference type="ChEBI" id="CHEBI:57834"/>
        <dbReference type="ChEBI" id="CHEBI:326268"/>
        <dbReference type="EC" id="2.5.1.16"/>
    </reaction>
</comment>
<comment type="pathway">
    <text evidence="1">Amine and polyamine biosynthesis; spermidine biosynthesis; spermidine from putrescine: step 1/1.</text>
</comment>
<comment type="subunit">
    <text evidence="1">Homodimer or homotetramer.</text>
</comment>
<comment type="subcellular location">
    <subcellularLocation>
        <location evidence="1">Cell membrane</location>
        <topology evidence="1">Multi-pass membrane protein</topology>
    </subcellularLocation>
</comment>
<comment type="similarity">
    <text evidence="1">Belongs to the spermidine/spermine synthase family.</text>
</comment>